<name>RL4_SPIKU</name>
<organism>
    <name type="scientific">Spiroplasma kunkelii</name>
    <dbReference type="NCBI Taxonomy" id="47834"/>
    <lineage>
        <taxon>Bacteria</taxon>
        <taxon>Bacillati</taxon>
        <taxon>Mycoplasmatota</taxon>
        <taxon>Mollicutes</taxon>
        <taxon>Entomoplasmatales</taxon>
        <taxon>Spiroplasmataceae</taxon>
        <taxon>Spiroplasma</taxon>
    </lineage>
</organism>
<comment type="function">
    <text evidence="1">One of the primary rRNA binding proteins, this protein initially binds near the 5'-end of the 23S rRNA. It is important during the early stages of 50S assembly. It makes multiple contacts with different domains of the 23S rRNA in the assembled 50S subunit and ribosome.</text>
</comment>
<comment type="function">
    <text evidence="1">Forms part of the polypeptide exit tunnel.</text>
</comment>
<comment type="subunit">
    <text evidence="1">Part of the 50S ribosomal subunit.</text>
</comment>
<comment type="similarity">
    <text evidence="1">Belongs to the universal ribosomal protein uL4 family.</text>
</comment>
<proteinExistence type="inferred from homology"/>
<gene>
    <name evidence="1" type="primary">rplD</name>
</gene>
<keyword id="KW-0687">Ribonucleoprotein</keyword>
<keyword id="KW-0689">Ribosomal protein</keyword>
<keyword id="KW-0694">RNA-binding</keyword>
<keyword id="KW-0699">rRNA-binding</keyword>
<reference key="1">
    <citation type="journal article" date="2003" name="Mol. Genet. Genomics">
        <title>Gene content and organization of an 85-kb DNA segment from the genome of the phytopathogenic mollicute Spiroplasma kunkelii.</title>
        <authorList>
            <person name="Zhao Y."/>
            <person name="Hammond R.W."/>
            <person name="Jomantiene R."/>
            <person name="Dally E.L."/>
            <person name="Lee I.-M."/>
            <person name="Jia H."/>
            <person name="Wu H."/>
            <person name="Lin S."/>
            <person name="Zhang P."/>
            <person name="Kenton S."/>
            <person name="Najar F.Z."/>
            <person name="Hua A."/>
            <person name="Roe B.A."/>
            <person name="Fletcher J."/>
            <person name="Davis R.E."/>
        </authorList>
    </citation>
    <scope>NUCLEOTIDE SEQUENCE [GENOMIC DNA]</scope>
    <source>
        <strain>CR2-3x</strain>
    </source>
</reference>
<feature type="chain" id="PRO_0000129273" description="Large ribosomal subunit protein uL4">
    <location>
        <begin position="1"/>
        <end position="208"/>
    </location>
</feature>
<feature type="region of interest" description="Disordered" evidence="2">
    <location>
        <begin position="42"/>
        <end position="77"/>
    </location>
</feature>
<evidence type="ECO:0000255" key="1">
    <source>
        <dbReference type="HAMAP-Rule" id="MF_01328"/>
    </source>
</evidence>
<evidence type="ECO:0000256" key="2">
    <source>
        <dbReference type="SAM" id="MobiDB-lite"/>
    </source>
</evidence>
<evidence type="ECO:0000305" key="3"/>
<dbReference type="EMBL" id="AY198133">
    <property type="protein sequence ID" value="AAP58893.1"/>
    <property type="molecule type" value="Genomic_DNA"/>
</dbReference>
<dbReference type="SMR" id="P61069"/>
<dbReference type="GO" id="GO:1990904">
    <property type="term" value="C:ribonucleoprotein complex"/>
    <property type="evidence" value="ECO:0007669"/>
    <property type="project" value="UniProtKB-KW"/>
</dbReference>
<dbReference type="GO" id="GO:0005840">
    <property type="term" value="C:ribosome"/>
    <property type="evidence" value="ECO:0007669"/>
    <property type="project" value="UniProtKB-KW"/>
</dbReference>
<dbReference type="GO" id="GO:0019843">
    <property type="term" value="F:rRNA binding"/>
    <property type="evidence" value="ECO:0007669"/>
    <property type="project" value="UniProtKB-UniRule"/>
</dbReference>
<dbReference type="GO" id="GO:0003735">
    <property type="term" value="F:structural constituent of ribosome"/>
    <property type="evidence" value="ECO:0007669"/>
    <property type="project" value="InterPro"/>
</dbReference>
<dbReference type="GO" id="GO:0006412">
    <property type="term" value="P:translation"/>
    <property type="evidence" value="ECO:0007669"/>
    <property type="project" value="UniProtKB-UniRule"/>
</dbReference>
<dbReference type="Gene3D" id="3.40.1370.10">
    <property type="match status" value="1"/>
</dbReference>
<dbReference type="HAMAP" id="MF_01328_B">
    <property type="entry name" value="Ribosomal_uL4_B"/>
    <property type="match status" value="1"/>
</dbReference>
<dbReference type="InterPro" id="IPR002136">
    <property type="entry name" value="Ribosomal_uL4"/>
</dbReference>
<dbReference type="InterPro" id="IPR013005">
    <property type="entry name" value="Ribosomal_uL4-like"/>
</dbReference>
<dbReference type="InterPro" id="IPR023574">
    <property type="entry name" value="Ribosomal_uL4_dom_sf"/>
</dbReference>
<dbReference type="NCBIfam" id="TIGR03953">
    <property type="entry name" value="rplD_bact"/>
    <property type="match status" value="1"/>
</dbReference>
<dbReference type="PANTHER" id="PTHR10746">
    <property type="entry name" value="50S RIBOSOMAL PROTEIN L4"/>
    <property type="match status" value="1"/>
</dbReference>
<dbReference type="PANTHER" id="PTHR10746:SF6">
    <property type="entry name" value="LARGE RIBOSOMAL SUBUNIT PROTEIN UL4M"/>
    <property type="match status" value="1"/>
</dbReference>
<dbReference type="Pfam" id="PF00573">
    <property type="entry name" value="Ribosomal_L4"/>
    <property type="match status" value="1"/>
</dbReference>
<dbReference type="SUPFAM" id="SSF52166">
    <property type="entry name" value="Ribosomal protein L4"/>
    <property type="match status" value="1"/>
</dbReference>
<accession>P61069</accession>
<protein>
    <recommendedName>
        <fullName evidence="1">Large ribosomal subunit protein uL4</fullName>
    </recommendedName>
    <alternativeName>
        <fullName evidence="3">50S ribosomal protein L4</fullName>
    </alternativeName>
</protein>
<sequence length="208" mass="23011">MKLQVLDANGTSVKEISVNDAIWGIEPHQQAMFDAVIAQQASMRQGTHKTKTKTEVSGGGRKPWRQKGTGRARQGSIRAPQWKGGGIVFGPTPEKKYLKHVNKKVRKLAIKSAFSLKVQDKNIMIIDQFGIDKPSTKAMVKVLNNLKVNGEKLLIITTEGDEVNFKSSRNIEKVNIITSAGINIYDLLNANKLLVTEQAIKAIEEVYS</sequence>